<reference key="1">
    <citation type="journal article" date="1998" name="Electrophoresis">
        <title>Two-dimensional gel electrophoresis separation and N-terminal sequence analysis of proteins from Clostridium pasteurianum W5.</title>
        <authorList>
            <person name="Flengsrud R."/>
            <person name="Skjeldal L."/>
        </authorList>
    </citation>
    <scope>PROTEIN SEQUENCE</scope>
    <source>
        <strain>ATCC 6013 / DSM 525 / NCIB 9486 / VKM B-1774 / W5</strain>
    </source>
</reference>
<feature type="chain" id="PRO_0000055542" description="Unknown protein CP 19 from 2D-PAGE">
    <location>
        <begin position="1"/>
        <end position="9" status="greater than"/>
    </location>
</feature>
<feature type="sequence variant">
    <original>M</original>
    <variation>D</variation>
    <location>
        <position position="8"/>
    </location>
</feature>
<feature type="non-terminal residue">
    <location>
        <position position="9"/>
    </location>
</feature>
<name>UN19_CLOPA</name>
<keyword id="KW-0903">Direct protein sequencing</keyword>
<protein>
    <recommendedName>
        <fullName>Unknown protein CP 19 from 2D-PAGE</fullName>
    </recommendedName>
</protein>
<proteinExistence type="evidence at protein level"/>
<organism>
    <name type="scientific">Clostridium pasteurianum</name>
    <dbReference type="NCBI Taxonomy" id="1501"/>
    <lineage>
        <taxon>Bacteria</taxon>
        <taxon>Bacillati</taxon>
        <taxon>Bacillota</taxon>
        <taxon>Clostridia</taxon>
        <taxon>Eubacteriales</taxon>
        <taxon>Clostridiaceae</taxon>
        <taxon>Clostridium</taxon>
    </lineage>
</organism>
<sequence length="9" mass="1132">XXFESXEMR</sequence>
<comment type="miscellaneous">
    <text>On the 2D-gel the determined pI of this unknown protein is: 6.5, its MW is: 38.0 kDa.</text>
</comment>
<accession>P81355</accession>